<organism>
    <name type="scientific">Neisseria gonorrhoeae</name>
    <dbReference type="NCBI Taxonomy" id="485"/>
    <lineage>
        <taxon>Bacteria</taxon>
        <taxon>Pseudomonadati</taxon>
        <taxon>Pseudomonadota</taxon>
        <taxon>Betaproteobacteria</taxon>
        <taxon>Neisseriales</taxon>
        <taxon>Neisseriaceae</taxon>
        <taxon>Neisseria</taxon>
    </lineage>
</organism>
<proteinExistence type="evidence at protein level"/>
<dbReference type="EMBL" id="AF128627">
    <property type="protein sequence ID" value="AAD44693.1"/>
    <property type="molecule type" value="Genomic_DNA"/>
</dbReference>
<dbReference type="EMBL" id="AF128628">
    <property type="protein sequence ID" value="AAD44694.1"/>
    <property type="molecule type" value="Genomic_DNA"/>
</dbReference>
<dbReference type="EMBL" id="AF128629">
    <property type="protein sequence ID" value="AAD44695.1"/>
    <property type="molecule type" value="Genomic_DNA"/>
</dbReference>
<dbReference type="EMBL" id="UGRK01000002">
    <property type="protein sequence ID" value="SUA05978.1"/>
    <property type="molecule type" value="Genomic_DNA"/>
</dbReference>
<dbReference type="RefSeq" id="WP_003689713.1">
    <property type="nucleotide sequence ID" value="NZ_VCDH01000010.1"/>
</dbReference>
<dbReference type="SMR" id="Q9WW32"/>
<dbReference type="CARD" id="ARO:3000816">
    <property type="molecule name" value="mtrA"/>
    <property type="mechanism identifier" value="ARO:0010000"/>
    <property type="mechanism name" value="antibiotic efflux"/>
</dbReference>
<dbReference type="GeneID" id="66752464"/>
<dbReference type="PATRIC" id="fig|485.43.peg.1137"/>
<dbReference type="GO" id="GO:0003700">
    <property type="term" value="F:DNA-binding transcription factor activity"/>
    <property type="evidence" value="ECO:0007669"/>
    <property type="project" value="InterPro"/>
</dbReference>
<dbReference type="GO" id="GO:0043565">
    <property type="term" value="F:sequence-specific DNA binding"/>
    <property type="evidence" value="ECO:0007669"/>
    <property type="project" value="InterPro"/>
</dbReference>
<dbReference type="Gene3D" id="1.10.10.60">
    <property type="entry name" value="Homeodomain-like"/>
    <property type="match status" value="2"/>
</dbReference>
<dbReference type="Gene3D" id="2.60.120.10">
    <property type="entry name" value="Jelly Rolls"/>
    <property type="match status" value="1"/>
</dbReference>
<dbReference type="InterPro" id="IPR032783">
    <property type="entry name" value="AraC_lig"/>
</dbReference>
<dbReference type="InterPro" id="IPR050204">
    <property type="entry name" value="AraC_XylS_family_regulators"/>
</dbReference>
<dbReference type="InterPro" id="IPR009057">
    <property type="entry name" value="Homeodomain-like_sf"/>
</dbReference>
<dbReference type="InterPro" id="IPR018060">
    <property type="entry name" value="HTH_AraC"/>
</dbReference>
<dbReference type="InterPro" id="IPR014710">
    <property type="entry name" value="RmlC-like_jellyroll"/>
</dbReference>
<dbReference type="InterPro" id="IPR011051">
    <property type="entry name" value="RmlC_Cupin_sf"/>
</dbReference>
<dbReference type="InterPro" id="IPR020449">
    <property type="entry name" value="Tscrpt_reg_AraC-type_HTH"/>
</dbReference>
<dbReference type="PANTHER" id="PTHR46796:SF13">
    <property type="entry name" value="HTH-TYPE TRANSCRIPTIONAL ACTIVATOR RHAS"/>
    <property type="match status" value="1"/>
</dbReference>
<dbReference type="PANTHER" id="PTHR46796">
    <property type="entry name" value="HTH-TYPE TRANSCRIPTIONAL ACTIVATOR RHAS-RELATED"/>
    <property type="match status" value="1"/>
</dbReference>
<dbReference type="Pfam" id="PF12852">
    <property type="entry name" value="Cupin_6"/>
    <property type="match status" value="1"/>
</dbReference>
<dbReference type="Pfam" id="PF12833">
    <property type="entry name" value="HTH_18"/>
    <property type="match status" value="1"/>
</dbReference>
<dbReference type="PRINTS" id="PR00032">
    <property type="entry name" value="HTHARAC"/>
</dbReference>
<dbReference type="SMART" id="SM00342">
    <property type="entry name" value="HTH_ARAC"/>
    <property type="match status" value="1"/>
</dbReference>
<dbReference type="SUPFAM" id="SSF46689">
    <property type="entry name" value="Homeodomain-like"/>
    <property type="match status" value="2"/>
</dbReference>
<dbReference type="SUPFAM" id="SSF51182">
    <property type="entry name" value="RmlC-like cupins"/>
    <property type="match status" value="1"/>
</dbReference>
<dbReference type="PROSITE" id="PS01124">
    <property type="entry name" value="HTH_ARAC_FAMILY_2"/>
    <property type="match status" value="1"/>
</dbReference>
<feature type="chain" id="PRO_0000445986" description="HTH-type transcriptional regulator MtrA">
    <location>
        <begin position="1"/>
        <end position="301"/>
    </location>
</feature>
<feature type="domain" description="HTH araC/xylS-type" evidence="1">
    <location>
        <begin position="196"/>
        <end position="297"/>
    </location>
</feature>
<feature type="DNA-binding region" description="H-T-H motif" evidence="1">
    <location>
        <begin position="216"/>
        <end position="237"/>
    </location>
</feature>
<feature type="DNA-binding region" description="H-T-H motif" evidence="1">
    <location>
        <begin position="264"/>
        <end position="287"/>
    </location>
</feature>
<feature type="mutagenesis site" description="Decreases DNA binding." evidence="3">
    <original>A</original>
    <variation>L</variation>
    <location>
        <position position="227"/>
    </location>
</feature>
<feature type="mutagenesis site" description="Decreases DNA binding." evidence="3">
    <original>R</original>
    <variation>L</variation>
    <location>
        <position position="231"/>
    </location>
</feature>
<feature type="mutagenesis site" description="Decreases DNA binding." evidence="3">
    <original>K</original>
    <variation>L</variation>
    <location>
        <position position="281"/>
    </location>
</feature>
<protein>
    <recommendedName>
        <fullName evidence="5">HTH-type transcriptional regulator MtrA</fullName>
    </recommendedName>
    <alternativeName>
        <fullName evidence="4">Mtr activator</fullName>
    </alternativeName>
</protein>
<reference key="1">
    <citation type="journal article" date="1999" name="Mol. Microbiol.">
        <title>Induction of the mtrCDE-encoded efflux pump system of Neisseria gonorrhoeae requires MtrA, an AraC-like protein.</title>
        <authorList>
            <person name="Rouquette C."/>
            <person name="Harmon J.B."/>
            <person name="Shafer W.M."/>
        </authorList>
    </citation>
    <scope>NUCLEOTIDE SEQUENCE [GENOMIC DNA]</scope>
    <scope>FUNCTION</scope>
    <source>
        <strain evidence="7">FA19</strain>
        <strain evidence="8">FA889</strain>
        <strain evidence="9">UU1</strain>
    </source>
</reference>
<reference key="2">
    <citation type="submission" date="2018-06" db="EMBL/GenBank/DDBJ databases">
        <authorList>
            <consortium name="Pathogen Informatics"/>
            <person name="Doyle S."/>
        </authorList>
    </citation>
    <scope>NUCLEOTIDE SEQUENCE [LARGE SCALE GENOMIC DNA]</scope>
    <source>
        <strain>NCTC 10931</strain>
    </source>
</reference>
<reference key="3">
    <citation type="journal article" date="2012" name="MBio">
        <title>Dueling regulatory properties of a transcriptional activator (MtrA) and repressor (MtrR) that control efflux pump gene expression in Neisseria gonorrhoeae.</title>
        <authorList>
            <person name="Zalucki Y.M."/>
            <person name="Dhulipala V."/>
            <person name="Shafer W.M."/>
        </authorList>
    </citation>
    <scope>FUNCTION</scope>
    <scope>DNA-BINDING</scope>
    <scope>ACTIVITY REGULATION</scope>
    <scope>MUTAGENESIS OF ALA-227; ARG-231 AND LYS-281</scope>
    <source>
        <strain>FA19</strain>
    </source>
</reference>
<sequence length="301" mass="33321">MDILDKLVDLAQLTGSADVQCLLGGQWSVRHETLQCEGLVHIVTAGSGYLCIDGETSPRPVGTGDIVFFPRGLGHVLSHDGKYGESLQPDIRQNGTFMVKQCGNGLDMSLFCARFRYDTHADLMNGLPETVFLNIAHPSLQYVVSMLQLESEKPLTGTVSVVNALPSVLLVLILRAYLEQDKDVELSGVLKGWQDKRLGHLIQKVIDKPEDEWNIDKMVAAANMSRAQLMRRFKSQVGLSPHAFVNHIRLQKGALLLKKTPDSVLEVALSVGFQSETHFGKAFKRQYHVSPGQYRKEGGQK</sequence>
<comment type="function">
    <text evidence="2 3">Involved in the induction of the mtrCDE-encoded efflux pump (PubMed:10417654). Binds specifically to the mtrCDE promoter region (PubMed:23221802). Required for high-level inducible resistance to the detergent Triton X-100 (TX-100) and the spermicide nonoxynol-9 (N-9) (PubMed:10417654).</text>
</comment>
<comment type="activity regulation">
    <text evidence="3">The affinity for the mtrCDE promoter increases 2-fold in the presence of TX-100, a known effector and substrate of the MtrCDE pump.</text>
</comment>
<comment type="miscellaneous">
    <text evidence="6">The MtrA and MtrR-binding sites are sterically close and addition of an effector increases the affinity of MtrA for the mtrCDE promoter such that MtrR binding is negatively impacted.</text>
</comment>
<gene>
    <name evidence="4" type="primary">mtrA</name>
    <name evidence="10" type="ORF">NCTC10931_01062</name>
</gene>
<keyword id="KW-0010">Activator</keyword>
<keyword id="KW-0238">DNA-binding</keyword>
<keyword id="KW-0804">Transcription</keyword>
<keyword id="KW-0805">Transcription regulation</keyword>
<name>MTRA_NEIGO</name>
<evidence type="ECO:0000255" key="1">
    <source>
        <dbReference type="PROSITE-ProRule" id="PRU00593"/>
    </source>
</evidence>
<evidence type="ECO:0000269" key="2">
    <source>
    </source>
</evidence>
<evidence type="ECO:0000269" key="3">
    <source>
    </source>
</evidence>
<evidence type="ECO:0000303" key="4">
    <source>
    </source>
</evidence>
<evidence type="ECO:0000305" key="5"/>
<evidence type="ECO:0000305" key="6">
    <source>
    </source>
</evidence>
<evidence type="ECO:0000312" key="7">
    <source>
        <dbReference type="EMBL" id="AAD44693.1"/>
    </source>
</evidence>
<evidence type="ECO:0000312" key="8">
    <source>
        <dbReference type="EMBL" id="AAD44694.1"/>
    </source>
</evidence>
<evidence type="ECO:0000312" key="9">
    <source>
        <dbReference type="EMBL" id="AAD44695.1"/>
    </source>
</evidence>
<evidence type="ECO:0000312" key="10">
    <source>
        <dbReference type="EMBL" id="SUA05978.1"/>
    </source>
</evidence>
<accession>Q9WW32</accession>